<protein>
    <recommendedName>
        <fullName>46 kDa surface antigen</fullName>
    </recommendedName>
    <alternativeName>
        <fullName>p46</fullName>
    </alternativeName>
</protein>
<accession>P0C0J7</accession>
<accession>P46192</accession>
<accession>Q600E4</accession>
<gene>
    <name type="primary">p46</name>
    <name type="ordered locus">mhp511</name>
</gene>
<keyword id="KW-1003">Cell membrane</keyword>
<keyword id="KW-0449">Lipoprotein</keyword>
<keyword id="KW-0472">Membrane</keyword>
<keyword id="KW-0564">Palmitate</keyword>
<keyword id="KW-0732">Signal</keyword>
<organism>
    <name type="scientific">Mesomycoplasma hyopneumoniae (strain 232)</name>
    <name type="common">Mycoplasma hyopneumoniae</name>
    <dbReference type="NCBI Taxonomy" id="295358"/>
    <lineage>
        <taxon>Bacteria</taxon>
        <taxon>Bacillati</taxon>
        <taxon>Mycoplasmatota</taxon>
        <taxon>Mycoplasmoidales</taxon>
        <taxon>Metamycoplasmataceae</taxon>
        <taxon>Mesomycoplasma</taxon>
    </lineage>
</organism>
<feature type="signal peptide" evidence="1">
    <location>
        <begin position="1"/>
        <end position="27"/>
    </location>
</feature>
<feature type="chain" id="PRO_0000018097" description="46 kDa surface antigen">
    <location>
        <begin position="28"/>
        <end position="416"/>
    </location>
</feature>
<feature type="lipid moiety-binding region" description="N-palmitoyl cysteine" evidence="1">
    <location>
        <position position="28"/>
    </location>
</feature>
<feature type="lipid moiety-binding region" description="S-diacylglycerol cysteine" evidence="1">
    <location>
        <position position="28"/>
    </location>
</feature>
<name>P46_MESH2</name>
<dbReference type="EMBL" id="AE017332">
    <property type="protein sequence ID" value="AAV27597.1"/>
    <property type="status" value="ALT_INIT"/>
    <property type="molecule type" value="Genomic_DNA"/>
</dbReference>
<dbReference type="RefSeq" id="WP_011206345.1">
    <property type="nucleotide sequence ID" value="NC_006360.1"/>
</dbReference>
<dbReference type="SMR" id="P0C0J7"/>
<dbReference type="GeneID" id="41334811"/>
<dbReference type="KEGG" id="mhy:mhp511"/>
<dbReference type="eggNOG" id="COG4213">
    <property type="taxonomic scope" value="Bacteria"/>
</dbReference>
<dbReference type="HOGENOM" id="CLU_612270_0_0_14"/>
<dbReference type="PhylomeDB" id="P0C0J7"/>
<dbReference type="Proteomes" id="UP000006822">
    <property type="component" value="Chromosome"/>
</dbReference>
<dbReference type="GO" id="GO:0030288">
    <property type="term" value="C:outer membrane-bounded periplasmic space"/>
    <property type="evidence" value="ECO:0007669"/>
    <property type="project" value="TreeGrafter"/>
</dbReference>
<dbReference type="GO" id="GO:0005886">
    <property type="term" value="C:plasma membrane"/>
    <property type="evidence" value="ECO:0007669"/>
    <property type="project" value="UniProtKB-SubCell"/>
</dbReference>
<dbReference type="GO" id="GO:0030246">
    <property type="term" value="F:carbohydrate binding"/>
    <property type="evidence" value="ECO:0007669"/>
    <property type="project" value="TreeGrafter"/>
</dbReference>
<dbReference type="CDD" id="cd19994">
    <property type="entry name" value="PBP1_ChvE"/>
    <property type="match status" value="1"/>
</dbReference>
<dbReference type="Gene3D" id="3.40.50.2300">
    <property type="match status" value="2"/>
</dbReference>
<dbReference type="InterPro" id="IPR050555">
    <property type="entry name" value="Bact_Solute-Bind_Prot2"/>
</dbReference>
<dbReference type="InterPro" id="IPR028082">
    <property type="entry name" value="Peripla_BP_I"/>
</dbReference>
<dbReference type="InterPro" id="IPR025997">
    <property type="entry name" value="SBP_2_dom"/>
</dbReference>
<dbReference type="InterPro" id="IPR054992">
    <property type="entry name" value="SurfProtP46"/>
</dbReference>
<dbReference type="NCBIfam" id="NF045705">
    <property type="entry name" value="SurfProtP46"/>
    <property type="match status" value="1"/>
</dbReference>
<dbReference type="PANTHER" id="PTHR30036">
    <property type="entry name" value="D-XYLOSE-BINDING PERIPLASMIC PROTEIN"/>
    <property type="match status" value="1"/>
</dbReference>
<dbReference type="PANTHER" id="PTHR30036:SF1">
    <property type="entry name" value="D-XYLOSE-BINDING PERIPLASMIC PROTEIN"/>
    <property type="match status" value="1"/>
</dbReference>
<dbReference type="Pfam" id="PF13407">
    <property type="entry name" value="Peripla_BP_4"/>
    <property type="match status" value="1"/>
</dbReference>
<dbReference type="SUPFAM" id="SSF53822">
    <property type="entry name" value="Periplasmic binding protein-like I"/>
    <property type="match status" value="1"/>
</dbReference>
<dbReference type="PROSITE" id="PS51257">
    <property type="entry name" value="PROKAR_LIPOPROTEIN"/>
    <property type="match status" value="1"/>
</dbReference>
<sequence>MLRKKFLYSSAIYATSLASIIAFVAAGCGQTESGSTSDSKPQAETLKHKVSNDSIRIALTDPDNPRWISAQKDIISYVDETEAATSTITKNQDAQNNWLTQQANLSPAPKGFIIAPENGSGVGTAVNTIADKGIPIVAYDRLITGSDKYDWYVSFDNEKVGELQGLSLAAGLLGKEDGAFDSIDQMNEYLKSHMPQETISFYTIAGSQDDNNSQYFYNGAMKVLKELMKNSQNKIIDLSPEGENAVYVPGWNYGTAGQRIQSFLTINKDPAGGNKIKAVGSKPASIFKGFLAPNDGMAEQAITKLKLEGFDTQKIFVTGQDYNDKAKTFIKDGDQNMTIYKPDKVLGKVAVEVLRVLIAKKNKASRSEVENELKAKLPNISFKYDNQTYKVQGKNINTILVSPVIVTKANVDNPDA</sequence>
<evidence type="ECO:0000255" key="1">
    <source>
        <dbReference type="PROSITE-ProRule" id="PRU00303"/>
    </source>
</evidence>
<evidence type="ECO:0000305" key="2"/>
<comment type="subcellular location">
    <subcellularLocation>
        <location evidence="1">Cell membrane</location>
        <topology evidence="1">Lipid-anchor</topology>
    </subcellularLocation>
</comment>
<comment type="sequence caution" evidence="2">
    <conflict type="erroneous initiation">
        <sequence resource="EMBL-CDS" id="AAV27597"/>
    </conflict>
</comment>
<reference key="1">
    <citation type="journal article" date="2004" name="J. Bacteriol.">
        <title>The genome sequence of Mycoplasma hyopneumoniae strain 232, the agent of swine mycoplasmosis.</title>
        <authorList>
            <person name="Minion F.C."/>
            <person name="Lefkowitz E.J."/>
            <person name="Madsen M.L."/>
            <person name="Cleary B.J."/>
            <person name="Swartzell S.M."/>
            <person name="Mahairas G.G."/>
        </authorList>
    </citation>
    <scope>NUCLEOTIDE SEQUENCE [LARGE SCALE GENOMIC DNA]</scope>
    <source>
        <strain>232</strain>
    </source>
</reference>
<proteinExistence type="inferred from homology"/>